<organism>
    <name type="scientific">Marinobacter nauticus (strain ATCC 700491 / DSM 11845 / VT8)</name>
    <name type="common">Marinobacter aquaeolei</name>
    <dbReference type="NCBI Taxonomy" id="351348"/>
    <lineage>
        <taxon>Bacteria</taxon>
        <taxon>Pseudomonadati</taxon>
        <taxon>Pseudomonadota</taxon>
        <taxon>Gammaproteobacteria</taxon>
        <taxon>Pseudomonadales</taxon>
        <taxon>Marinobacteraceae</taxon>
        <taxon>Marinobacter</taxon>
    </lineage>
</organism>
<proteinExistence type="inferred from homology"/>
<dbReference type="EC" id="3.6.5.3" evidence="2"/>
<dbReference type="EMBL" id="CP000514">
    <property type="protein sequence ID" value="ABM17814.1"/>
    <property type="molecule type" value="Genomic_DNA"/>
</dbReference>
<dbReference type="RefSeq" id="WP_011784245.1">
    <property type="nucleotide sequence ID" value="NC_008740.1"/>
</dbReference>
<dbReference type="SMR" id="A1TYJ5"/>
<dbReference type="STRING" id="351348.Maqu_0717"/>
<dbReference type="GeneID" id="31820092"/>
<dbReference type="KEGG" id="maq:Maqu_0717"/>
<dbReference type="eggNOG" id="COG0050">
    <property type="taxonomic scope" value="Bacteria"/>
</dbReference>
<dbReference type="HOGENOM" id="CLU_007265_0_1_6"/>
<dbReference type="OrthoDB" id="9803139at2"/>
<dbReference type="Proteomes" id="UP000000998">
    <property type="component" value="Chromosome"/>
</dbReference>
<dbReference type="GO" id="GO:0005829">
    <property type="term" value="C:cytosol"/>
    <property type="evidence" value="ECO:0007669"/>
    <property type="project" value="TreeGrafter"/>
</dbReference>
<dbReference type="GO" id="GO:0005525">
    <property type="term" value="F:GTP binding"/>
    <property type="evidence" value="ECO:0007669"/>
    <property type="project" value="UniProtKB-UniRule"/>
</dbReference>
<dbReference type="GO" id="GO:0003924">
    <property type="term" value="F:GTPase activity"/>
    <property type="evidence" value="ECO:0007669"/>
    <property type="project" value="InterPro"/>
</dbReference>
<dbReference type="GO" id="GO:0097216">
    <property type="term" value="F:guanosine tetraphosphate binding"/>
    <property type="evidence" value="ECO:0007669"/>
    <property type="project" value="UniProtKB-ARBA"/>
</dbReference>
<dbReference type="GO" id="GO:0003746">
    <property type="term" value="F:translation elongation factor activity"/>
    <property type="evidence" value="ECO:0007669"/>
    <property type="project" value="UniProtKB-UniRule"/>
</dbReference>
<dbReference type="CDD" id="cd01884">
    <property type="entry name" value="EF_Tu"/>
    <property type="match status" value="1"/>
</dbReference>
<dbReference type="CDD" id="cd03697">
    <property type="entry name" value="EFTU_II"/>
    <property type="match status" value="1"/>
</dbReference>
<dbReference type="CDD" id="cd03707">
    <property type="entry name" value="EFTU_III"/>
    <property type="match status" value="1"/>
</dbReference>
<dbReference type="FunFam" id="2.40.30.10:FF:000001">
    <property type="entry name" value="Elongation factor Tu"/>
    <property type="match status" value="1"/>
</dbReference>
<dbReference type="FunFam" id="3.40.50.300:FF:000003">
    <property type="entry name" value="Elongation factor Tu"/>
    <property type="match status" value="1"/>
</dbReference>
<dbReference type="Gene3D" id="3.40.50.300">
    <property type="entry name" value="P-loop containing nucleotide triphosphate hydrolases"/>
    <property type="match status" value="1"/>
</dbReference>
<dbReference type="Gene3D" id="2.40.30.10">
    <property type="entry name" value="Translation factors"/>
    <property type="match status" value="2"/>
</dbReference>
<dbReference type="HAMAP" id="MF_00118_B">
    <property type="entry name" value="EF_Tu_B"/>
    <property type="match status" value="1"/>
</dbReference>
<dbReference type="InterPro" id="IPR041709">
    <property type="entry name" value="EF-Tu_GTP-bd"/>
</dbReference>
<dbReference type="InterPro" id="IPR050055">
    <property type="entry name" value="EF-Tu_GTPase"/>
</dbReference>
<dbReference type="InterPro" id="IPR004161">
    <property type="entry name" value="EFTu-like_2"/>
</dbReference>
<dbReference type="InterPro" id="IPR033720">
    <property type="entry name" value="EFTU_2"/>
</dbReference>
<dbReference type="InterPro" id="IPR031157">
    <property type="entry name" value="G_TR_CS"/>
</dbReference>
<dbReference type="InterPro" id="IPR027417">
    <property type="entry name" value="P-loop_NTPase"/>
</dbReference>
<dbReference type="InterPro" id="IPR005225">
    <property type="entry name" value="Small_GTP-bd"/>
</dbReference>
<dbReference type="InterPro" id="IPR000795">
    <property type="entry name" value="T_Tr_GTP-bd_dom"/>
</dbReference>
<dbReference type="InterPro" id="IPR009000">
    <property type="entry name" value="Transl_B-barrel_sf"/>
</dbReference>
<dbReference type="InterPro" id="IPR009001">
    <property type="entry name" value="Transl_elong_EF1A/Init_IF2_C"/>
</dbReference>
<dbReference type="InterPro" id="IPR004541">
    <property type="entry name" value="Transl_elong_EFTu/EF1A_bac/org"/>
</dbReference>
<dbReference type="InterPro" id="IPR004160">
    <property type="entry name" value="Transl_elong_EFTu/EF1A_C"/>
</dbReference>
<dbReference type="NCBIfam" id="TIGR00485">
    <property type="entry name" value="EF-Tu"/>
    <property type="match status" value="1"/>
</dbReference>
<dbReference type="NCBIfam" id="NF000766">
    <property type="entry name" value="PRK00049.1"/>
    <property type="match status" value="1"/>
</dbReference>
<dbReference type="NCBIfam" id="NF009372">
    <property type="entry name" value="PRK12735.1"/>
    <property type="match status" value="1"/>
</dbReference>
<dbReference type="NCBIfam" id="NF009373">
    <property type="entry name" value="PRK12736.1"/>
    <property type="match status" value="1"/>
</dbReference>
<dbReference type="NCBIfam" id="TIGR00231">
    <property type="entry name" value="small_GTP"/>
    <property type="match status" value="1"/>
</dbReference>
<dbReference type="PANTHER" id="PTHR43721:SF22">
    <property type="entry name" value="ELONGATION FACTOR TU, MITOCHONDRIAL"/>
    <property type="match status" value="1"/>
</dbReference>
<dbReference type="PANTHER" id="PTHR43721">
    <property type="entry name" value="ELONGATION FACTOR TU-RELATED"/>
    <property type="match status" value="1"/>
</dbReference>
<dbReference type="Pfam" id="PF00009">
    <property type="entry name" value="GTP_EFTU"/>
    <property type="match status" value="1"/>
</dbReference>
<dbReference type="Pfam" id="PF03144">
    <property type="entry name" value="GTP_EFTU_D2"/>
    <property type="match status" value="1"/>
</dbReference>
<dbReference type="Pfam" id="PF03143">
    <property type="entry name" value="GTP_EFTU_D3"/>
    <property type="match status" value="1"/>
</dbReference>
<dbReference type="PRINTS" id="PR00315">
    <property type="entry name" value="ELONGATNFCT"/>
</dbReference>
<dbReference type="SUPFAM" id="SSF50465">
    <property type="entry name" value="EF-Tu/eEF-1alpha/eIF2-gamma C-terminal domain"/>
    <property type="match status" value="1"/>
</dbReference>
<dbReference type="SUPFAM" id="SSF52540">
    <property type="entry name" value="P-loop containing nucleoside triphosphate hydrolases"/>
    <property type="match status" value="1"/>
</dbReference>
<dbReference type="SUPFAM" id="SSF50447">
    <property type="entry name" value="Translation proteins"/>
    <property type="match status" value="1"/>
</dbReference>
<dbReference type="PROSITE" id="PS00301">
    <property type="entry name" value="G_TR_1"/>
    <property type="match status" value="1"/>
</dbReference>
<dbReference type="PROSITE" id="PS51722">
    <property type="entry name" value="G_TR_2"/>
    <property type="match status" value="1"/>
</dbReference>
<feature type="chain" id="PRO_1000015683" description="Elongation factor Tu">
    <location>
        <begin position="1"/>
        <end position="398"/>
    </location>
</feature>
<feature type="domain" description="tr-type G">
    <location>
        <begin position="10"/>
        <end position="208"/>
    </location>
</feature>
<feature type="region of interest" description="G1" evidence="1">
    <location>
        <begin position="19"/>
        <end position="26"/>
    </location>
</feature>
<feature type="region of interest" description="G2" evidence="1">
    <location>
        <begin position="61"/>
        <end position="65"/>
    </location>
</feature>
<feature type="region of interest" description="G3" evidence="1">
    <location>
        <begin position="82"/>
        <end position="85"/>
    </location>
</feature>
<feature type="region of interest" description="G4" evidence="1">
    <location>
        <begin position="137"/>
        <end position="140"/>
    </location>
</feature>
<feature type="region of interest" description="G5" evidence="1">
    <location>
        <begin position="175"/>
        <end position="177"/>
    </location>
</feature>
<feature type="binding site" evidence="2">
    <location>
        <begin position="19"/>
        <end position="26"/>
    </location>
    <ligand>
        <name>GTP</name>
        <dbReference type="ChEBI" id="CHEBI:37565"/>
    </ligand>
</feature>
<feature type="binding site" evidence="2">
    <location>
        <position position="26"/>
    </location>
    <ligand>
        <name>Mg(2+)</name>
        <dbReference type="ChEBI" id="CHEBI:18420"/>
    </ligand>
</feature>
<feature type="binding site" evidence="2">
    <location>
        <begin position="82"/>
        <end position="86"/>
    </location>
    <ligand>
        <name>GTP</name>
        <dbReference type="ChEBI" id="CHEBI:37565"/>
    </ligand>
</feature>
<feature type="binding site" evidence="2">
    <location>
        <begin position="137"/>
        <end position="140"/>
    </location>
    <ligand>
        <name>GTP</name>
        <dbReference type="ChEBI" id="CHEBI:37565"/>
    </ligand>
</feature>
<name>EFTU_MARN8</name>
<evidence type="ECO:0000250" key="1"/>
<evidence type="ECO:0000255" key="2">
    <source>
        <dbReference type="HAMAP-Rule" id="MF_00118"/>
    </source>
</evidence>
<sequence length="398" mass="43663">MSKAKFERNKPHVNVGTIGHVDHGKTTLTAALTRVCHEVWGTGESRAFDQIDNAPEERARGITIATSHVEYDSPTRHYAHVDCPGHADYVKNMITGAAQMDGAILVCSAADGPMPQTREHILLSRQVGVPFIVVFLNKADMVDDEELLELVEMEVRDLLSQYDFPGDDTPIITGSALMALEGKDDNEMGTTAVKKLVEALDDYIPEPERAIDQPFLMPIEDVFSISGRGTVVTGRVERGIIKVGDEVEIVGIRDTTKTTCTGVEMFRKLLDEGRAGENVGVLLRGTKRDDVERGQVLCVPGSIKPHTKFECEVYVLSKEEGGRHTPFFKGYRPQFYFRTTDVTGSCELPEGVEMVMPGDNVKMTVTLIAPIAMEDGLRFAIREGGRTVGAGVVAKIIE</sequence>
<comment type="function">
    <text evidence="2">GTP hydrolase that promotes the GTP-dependent binding of aminoacyl-tRNA to the A-site of ribosomes during protein biosynthesis.</text>
</comment>
<comment type="catalytic activity">
    <reaction evidence="2">
        <text>GTP + H2O = GDP + phosphate + H(+)</text>
        <dbReference type="Rhea" id="RHEA:19669"/>
        <dbReference type="ChEBI" id="CHEBI:15377"/>
        <dbReference type="ChEBI" id="CHEBI:15378"/>
        <dbReference type="ChEBI" id="CHEBI:37565"/>
        <dbReference type="ChEBI" id="CHEBI:43474"/>
        <dbReference type="ChEBI" id="CHEBI:58189"/>
        <dbReference type="EC" id="3.6.5.3"/>
    </reaction>
    <physiologicalReaction direction="left-to-right" evidence="2">
        <dbReference type="Rhea" id="RHEA:19670"/>
    </physiologicalReaction>
</comment>
<comment type="subunit">
    <text evidence="2">Monomer.</text>
</comment>
<comment type="subcellular location">
    <subcellularLocation>
        <location evidence="2">Cytoplasm</location>
    </subcellularLocation>
</comment>
<comment type="similarity">
    <text evidence="2">Belongs to the TRAFAC class translation factor GTPase superfamily. Classic translation factor GTPase family. EF-Tu/EF-1A subfamily.</text>
</comment>
<gene>
    <name evidence="2" type="primary">tuf</name>
    <name type="ordered locus">Maqu_0717</name>
</gene>
<protein>
    <recommendedName>
        <fullName evidence="2">Elongation factor Tu</fullName>
        <shortName evidence="2">EF-Tu</shortName>
        <ecNumber evidence="2">3.6.5.3</ecNumber>
    </recommendedName>
</protein>
<accession>A1TYJ5</accession>
<reference key="1">
    <citation type="journal article" date="2011" name="Appl. Environ. Microbiol.">
        <title>Genomic potential of Marinobacter aquaeolei, a biogeochemical 'opportunitroph'.</title>
        <authorList>
            <person name="Singer E."/>
            <person name="Webb E.A."/>
            <person name="Nelson W.C."/>
            <person name="Heidelberg J.F."/>
            <person name="Ivanova N."/>
            <person name="Pati A."/>
            <person name="Edwards K.J."/>
        </authorList>
    </citation>
    <scope>NUCLEOTIDE SEQUENCE [LARGE SCALE GENOMIC DNA]</scope>
    <source>
        <strain>ATCC 700491 / DSM 11845 / VT8</strain>
    </source>
</reference>
<keyword id="KW-0963">Cytoplasm</keyword>
<keyword id="KW-0251">Elongation factor</keyword>
<keyword id="KW-0342">GTP-binding</keyword>
<keyword id="KW-0378">Hydrolase</keyword>
<keyword id="KW-0460">Magnesium</keyword>
<keyword id="KW-0479">Metal-binding</keyword>
<keyword id="KW-0547">Nucleotide-binding</keyword>
<keyword id="KW-0648">Protein biosynthesis</keyword>